<name>WNT7A_HUMAN</name>
<organism>
    <name type="scientific">Homo sapiens</name>
    <name type="common">Human</name>
    <dbReference type="NCBI Taxonomy" id="9606"/>
    <lineage>
        <taxon>Eukaryota</taxon>
        <taxon>Metazoa</taxon>
        <taxon>Chordata</taxon>
        <taxon>Craniata</taxon>
        <taxon>Vertebrata</taxon>
        <taxon>Euteleostomi</taxon>
        <taxon>Mammalia</taxon>
        <taxon>Eutheria</taxon>
        <taxon>Euarchontoglires</taxon>
        <taxon>Primates</taxon>
        <taxon>Haplorrhini</taxon>
        <taxon>Catarrhini</taxon>
        <taxon>Hominidae</taxon>
        <taxon>Homo</taxon>
    </lineage>
</organism>
<proteinExistence type="evidence at protein level"/>
<evidence type="ECO:0000250" key="1">
    <source>
        <dbReference type="UniProtKB" id="P24383"/>
    </source>
</evidence>
<evidence type="ECO:0000250" key="2">
    <source>
        <dbReference type="UniProtKB" id="P27467"/>
    </source>
</evidence>
<evidence type="ECO:0000250" key="3">
    <source>
        <dbReference type="UniProtKB" id="P28026"/>
    </source>
</evidence>
<evidence type="ECO:0000250" key="4">
    <source>
        <dbReference type="UniProtKB" id="P56704"/>
    </source>
</evidence>
<evidence type="ECO:0000255" key="5"/>
<evidence type="ECO:0000269" key="6">
    <source>
    </source>
</evidence>
<evidence type="ECO:0000269" key="7">
    <source>
    </source>
</evidence>
<evidence type="ECO:0000269" key="8">
    <source>
    </source>
</evidence>
<evidence type="ECO:0000269" key="9">
    <source>
    </source>
</evidence>
<evidence type="ECO:0000269" key="10">
    <source>
    </source>
</evidence>
<evidence type="ECO:0000269" key="11">
    <source>
    </source>
</evidence>
<evidence type="ECO:0000269" key="12">
    <source>
    </source>
</evidence>
<evidence type="ECO:0000269" key="13">
    <source>
    </source>
</evidence>
<evidence type="ECO:0000269" key="14">
    <source>
    </source>
</evidence>
<evidence type="ECO:0000305" key="15"/>
<evidence type="ECO:0000305" key="16">
    <source>
    </source>
</evidence>
<evidence type="ECO:0007744" key="17">
    <source>
        <dbReference type="PDB" id="4UZQ"/>
    </source>
</evidence>
<evidence type="ECO:0007829" key="18">
    <source>
        <dbReference type="PDB" id="8TZO"/>
    </source>
</evidence>
<evidence type="ECO:0007829" key="19">
    <source>
        <dbReference type="PDB" id="8TZP"/>
    </source>
</evidence>
<keyword id="KW-0002">3D-structure</keyword>
<keyword id="KW-0217">Developmental protein</keyword>
<keyword id="KW-0225">Disease variant</keyword>
<keyword id="KW-1015">Disulfide bond</keyword>
<keyword id="KW-0272">Extracellular matrix</keyword>
<keyword id="KW-0325">Glycoprotein</keyword>
<keyword id="KW-0449">Lipoprotein</keyword>
<keyword id="KW-1267">Proteomics identification</keyword>
<keyword id="KW-1185">Reference proteome</keyword>
<keyword id="KW-0964">Secreted</keyword>
<keyword id="KW-0732">Signal</keyword>
<keyword id="KW-0879">Wnt signaling pathway</keyword>
<accession>O00755</accession>
<accession>Q96H90</accession>
<accession>Q9Y560</accession>
<comment type="function">
    <text evidence="1 6 14">Ligand for members of the frizzled family of seven transmembrane receptors that functions in the canonical Wnt/beta-catenin signaling pathway (By similarity). Plays an important role in embryonic development, including dorsal versus ventral patterning during limb development, skeleton development and urogenital tract development (PubMed:16826533). Required for central nervous system (CNS) angiogenesis and blood-brain barrier regulation (PubMed:30026314). Required for normal, sexually dimorphic development of the Mullerian ducts, and for normal fertility in both sexes (By similarity). Required for normal neural stem cell proliferation in the hippocampus dentate gyrus (By similarity). Required for normal progress through the cell cycle in neural progenitor cells, for self-renewal of neural stem cells, and for normal neuronal differentiation and maturation (By similarity). Promotes formation of synapses via its interaction with FZD5 (By similarity).</text>
</comment>
<comment type="subunit">
    <text evidence="1 10 11 14">Forms a soluble 1:1 complex with AFM; this prevents oligomerization and is required for prolonged biological activity (PubMed:26902720). The complex with AFM may represent the physiological form in body fluids (PubMed:26902720). Interacts with PORCN (By similarity). Interacts (via intrinsically disordered linker region) with RECK; interaction with RECK confers ligand selectivity for Wnt7 in brain endothelial cells and allows these cells to selectively respond to Wnt7 (PubMed:30026314). Interacts with FZD5 (PubMed:26908622).</text>
</comment>
<comment type="interaction">
    <interactant intactId="EBI-727198">
        <id>O00755</id>
    </interactant>
    <interactant intactId="EBI-718729">
        <id>P55212</id>
        <label>CASP6</label>
    </interactant>
    <organismsDiffer>false</organismsDiffer>
    <experiments>3</experiments>
</comment>
<comment type="interaction">
    <interactant intactId="EBI-727198">
        <id>O00755</id>
    </interactant>
    <interactant intactId="EBI-348399">
        <id>P22607</id>
        <label>FGFR3</label>
    </interactant>
    <organismsDiffer>false</organismsDiffer>
    <experiments>3</experiments>
</comment>
<comment type="interaction">
    <interactant intactId="EBI-727198">
        <id>O00755</id>
    </interactant>
    <interactant intactId="EBI-351506">
        <id>P06396</id>
        <label>GSN</label>
    </interactant>
    <organismsDiffer>false</organismsDiffer>
    <experiments>3</experiments>
</comment>
<comment type="interaction">
    <interactant intactId="EBI-727198">
        <id>O00755</id>
    </interactant>
    <interactant intactId="EBI-21591415">
        <id>P13473-2</id>
        <label>LAMP2</label>
    </interactant>
    <organismsDiffer>false</organismsDiffer>
    <experiments>3</experiments>
</comment>
<comment type="interaction">
    <interactant intactId="EBI-727198">
        <id>O00755</id>
    </interactant>
    <interactant intactId="EBI-741480">
        <id>Q9UMX0</id>
        <label>UBQLN1</label>
    </interactant>
    <organismsDiffer>false</organismsDiffer>
    <experiments>3</experiments>
</comment>
<comment type="interaction">
    <interactant intactId="EBI-727198">
        <id>O00755</id>
    </interactant>
    <interactant intactId="EBI-3922719">
        <id>Q9Y5W5</id>
        <label>WIF1</label>
    </interactant>
    <organismsDiffer>false</organismsDiffer>
    <experiments>3</experiments>
</comment>
<comment type="interaction">
    <interactant intactId="EBI-727198">
        <id>O00755</id>
    </interactant>
    <interactant intactId="EBI-2868748">
        <id>Q5T9L3</id>
        <label>WLS</label>
    </interactant>
    <organismsDiffer>false</organismsDiffer>
    <experiments>3</experiments>
</comment>
<comment type="interaction">
    <interactant intactId="EBI-727198">
        <id>O00755</id>
    </interactant>
    <interactant intactId="EBI-20720091">
        <id>Q9Z0J1</id>
        <label>Reck</label>
    </interactant>
    <organismsDiffer>true</organismsDiffer>
    <experiments>4</experiments>
</comment>
<comment type="subcellular location">
    <subcellularLocation>
        <location evidence="15">Secreted</location>
        <location evidence="15">Extracellular space</location>
        <location evidence="15">Extracellular matrix</location>
    </subcellularLocation>
    <subcellularLocation>
        <location evidence="10">Secreted</location>
    </subcellularLocation>
</comment>
<comment type="tissue specificity">
    <text>Expression is restricted to placenta, kidney, testis, uterus, fetal lung, and fetal and adult brain.</text>
</comment>
<comment type="domain">
    <text evidence="14">The intrinsically disordered linker region is required for recognition by RECK in brain endothelial cells.</text>
</comment>
<comment type="PTM">
    <text evidence="2 4">Palmitoleoylation is required for efficient binding to frizzled receptors. Depalmitoleoylation leads to Wnt signaling pathway inhibition.</text>
</comment>
<comment type="disease" evidence="6 7 8 9 12">
    <disease id="DI-01908">
        <name>Limb pelvis hypoplasia aplasia syndrome</name>
        <acronym>LPHAS</acronym>
        <description>A syndrome of severe deficiency of the extremities due to hypo- or aplasia of one or more long bones of one or more limbs. Pelvic manifestations include hip dislocation, hypoplastic iliac bone and aplastic pubic bones. Thoracic deformity, unusual facies and genitourinary anomalies can be present.</description>
        <dbReference type="MIM" id="276820"/>
    </disease>
    <text>The disease is caused by variants affecting the gene represented in this entry.</text>
</comment>
<comment type="disease" evidence="6">
    <disease id="DI-01637">
        <name>Fuhrmann syndrome</name>
        <acronym>FUHRS</acronym>
        <description>An autosomal recessive disorder characterized by severe bowing of femora, aplasia or hypoplasia of fibulae, hypoplasia of the pelvis, and congenital dislocation of the hip. Patients exhibit absence or coalescence of tarsal bones, absence of various metatarsals, hypoplasia and aplasia of toes, clinodactyly, hypoplasia of fingers and fingernails, and postaxial polydactyly.</description>
        <dbReference type="MIM" id="228930"/>
    </disease>
    <text>The disease is caused by variants affecting the gene represented in this entry.</text>
</comment>
<comment type="disease" evidence="13">
    <disease id="DI-06976">
        <name>Santos syndrome</name>
        <acronym>SS</acronym>
        <description>An autosomal recessive syndrome characterized by short stature due to mesomelic shortening of the lower limbs with fibular agenesis or hypoplasia, clubfeet with severe oligodactyly, upper limbs with acromial dimples and variable motion limitation of the forearms and/or hands, and severe nail hypoplasia or anonychia that is associated with brachydactyly in some cases. Pre-axial polydactyly may also be present.</description>
        <dbReference type="MIM" id="613005"/>
    </disease>
    <text>The disease may be caused by variants affecting the gene represented in this entry.</text>
</comment>
<comment type="similarity">
    <text evidence="15">Belongs to the Wnt family.</text>
</comment>
<feature type="signal peptide" evidence="5">
    <location>
        <begin position="1"/>
        <end position="31"/>
    </location>
</feature>
<feature type="chain" id="PRO_0000041442" description="Protein Wnt-7a">
    <location>
        <begin position="32"/>
        <end position="349"/>
    </location>
</feature>
<feature type="region of interest" description="Disordered linker" evidence="14">
    <location>
        <begin position="238"/>
        <end position="266"/>
    </location>
</feature>
<feature type="lipid moiety-binding region" description="O-palmitoleoyl serine; by PORCN" evidence="16">
    <location>
        <position position="206"/>
    </location>
</feature>
<feature type="glycosylation site" description="N-linked (GlcNAc...) asparagine" evidence="5">
    <location>
        <position position="83"/>
    </location>
</feature>
<feature type="glycosylation site" description="N-linked (GlcNAc...) asparagine" evidence="5">
    <location>
        <position position="127"/>
    </location>
</feature>
<feature type="glycosylation site" description="N-linked (GlcNAc...) asparagine" evidence="5">
    <location>
        <position position="295"/>
    </location>
</feature>
<feature type="disulfide bond" evidence="3">
    <location>
        <begin position="73"/>
        <end position="84"/>
    </location>
</feature>
<feature type="disulfide bond" evidence="3">
    <location>
        <begin position="123"/>
        <end position="131"/>
    </location>
</feature>
<feature type="disulfide bond" evidence="3">
    <location>
        <begin position="133"/>
        <end position="152"/>
    </location>
</feature>
<feature type="disulfide bond" evidence="3">
    <location>
        <begin position="200"/>
        <end position="214"/>
    </location>
</feature>
<feature type="disulfide bond" evidence="3">
    <location>
        <begin position="202"/>
        <end position="209"/>
    </location>
</feature>
<feature type="disulfide bond" evidence="3">
    <location>
        <begin position="278"/>
        <end position="309"/>
    </location>
</feature>
<feature type="disulfide bond" evidence="3">
    <location>
        <begin position="294"/>
        <end position="304"/>
    </location>
</feature>
<feature type="disulfide bond" evidence="3">
    <location>
        <begin position="308"/>
        <end position="348"/>
    </location>
</feature>
<feature type="disulfide bond" evidence="3">
    <location>
        <begin position="324"/>
        <end position="339"/>
    </location>
</feature>
<feature type="disulfide bond" evidence="3">
    <location>
        <begin position="326"/>
        <end position="336"/>
    </location>
</feature>
<feature type="disulfide bond" evidence="3">
    <location>
        <begin position="331"/>
        <end position="332"/>
    </location>
</feature>
<feature type="sequence variant" id="VAR_065765" description="In LPHAS; dbSNP:rs397514666." evidence="9">
    <original>E</original>
    <variation>K</variation>
    <location>
        <position position="72"/>
    </location>
</feature>
<feature type="sequence variant" id="VAR_077340" description="In LPHAS; uncertain significance; dbSNP:rs879255548." evidence="12">
    <original>R</original>
    <variation>W</variation>
    <location>
        <position position="102"/>
    </location>
</feature>
<feature type="sequence variant" id="VAR_030673" description="In FUHRS; retains activity that is significant but not comparable to wild-type activity; dbSNP:rs104893832." evidence="6">
    <original>A</original>
    <variation>T</variation>
    <location>
        <position position="109"/>
    </location>
</feature>
<feature type="sequence variant" id="VAR_064480" description="In LPHAS; dbSNP:rs397514643." evidence="8">
    <original>R</original>
    <variation>W</variation>
    <location>
        <position position="222"/>
    </location>
</feature>
<feature type="sequence variant" id="VAR_030674" description="In LPHAS; results in a loss of function mutation with some residual activity; dbSNP:rs104893835." evidence="6 7">
    <original>R</original>
    <variation>C</variation>
    <location>
        <position position="292"/>
    </location>
</feature>
<feature type="sequence variant" id="VAR_090238" description="In SS; uncertain significance." evidence="13">
    <original>G</original>
    <variation>S</variation>
    <location>
        <position position="312"/>
    </location>
</feature>
<feature type="mutagenesis site" description="Does not affect interaction with RECK." evidence="14">
    <original>S</original>
    <variation>A</variation>
    <location>
        <position position="206"/>
    </location>
</feature>
<feature type="mutagenesis site" description="In 4A; abolished interaction with RECK; when associated with 251-A-A-252 and A-262." evidence="14">
    <original>V</original>
    <variation>A</variation>
    <location>
        <position position="241"/>
    </location>
</feature>
<feature type="mutagenesis site" description="In 4A; abolished interaction with RECK; when associated with A-241 and A-262." evidence="14">
    <original>FL</original>
    <variation>AA</variation>
    <location>
        <begin position="251"/>
        <end position="252"/>
    </location>
</feature>
<feature type="mutagenesis site" description="In 4A; abolished interaction with RECK; when associated with A-241 and 251-A-A-252." evidence="14">
    <original>K</original>
    <variation>A</variation>
    <location>
        <position position="262"/>
    </location>
</feature>
<feature type="sequence conflict" description="In Ref. 1; AAC51319." evidence="15" ref="1">
    <original>R</original>
    <variation>L</variation>
    <location>
        <position position="6"/>
    </location>
</feature>
<feature type="sequence conflict" description="In Ref. 2; BAA82509." evidence="15" ref="2">
    <original>L</original>
    <variation>F</variation>
    <location>
        <position position="14"/>
    </location>
</feature>
<feature type="sequence conflict" description="In Ref. 1; AAC51319." evidence="15" ref="1">
    <original>Y</original>
    <variation>C</variation>
    <location>
        <position position="20"/>
    </location>
</feature>
<feature type="sequence conflict" description="In Ref. 1; AAC51319." evidence="15" ref="1">
    <original>S</original>
    <variation>T</variation>
    <location>
        <position position="35"/>
    </location>
</feature>
<feature type="sequence conflict" description="In Ref. 1; AAC51319." evidence="15" ref="1">
    <original>EA</original>
    <variation>DG</variation>
    <location>
        <begin position="103"/>
        <end position="104"/>
    </location>
</feature>
<feature type="sequence conflict" description="In Ref. 1; AAC51319." evidence="15" ref="1">
    <original>Q</original>
    <variation>H</variation>
    <location>
        <position position="125"/>
    </location>
</feature>
<feature type="sequence conflict" description="In Ref. 5; no nucleotide entry." evidence="15" ref="5">
    <original>E</original>
    <variation>G</variation>
    <location>
        <position position="280"/>
    </location>
</feature>
<feature type="sequence conflict" description="In Ref. 2; BAA82509." evidence="15" ref="2">
    <original>H</original>
    <variation>Q</variation>
    <location>
        <position position="329"/>
    </location>
</feature>
<feature type="sequence conflict" description="In Ref. 2; BAA82509." evidence="15" ref="2">
    <original>T</original>
    <variation>K</variation>
    <location>
        <position position="338"/>
    </location>
</feature>
<feature type="turn" evidence="18">
    <location>
        <begin position="38"/>
        <end position="40"/>
    </location>
</feature>
<feature type="helix" evidence="18">
    <location>
        <begin position="46"/>
        <end position="54"/>
    </location>
</feature>
<feature type="helix" evidence="18">
    <location>
        <begin position="56"/>
        <end position="76"/>
    </location>
</feature>
<feature type="turn" evidence="18">
    <location>
        <begin position="77"/>
        <end position="79"/>
    </location>
</feature>
<feature type="strand" evidence="18">
    <location>
        <begin position="80"/>
        <end position="82"/>
    </location>
</feature>
<feature type="helix" evidence="18">
    <location>
        <begin position="102"/>
        <end position="124"/>
    </location>
</feature>
<feature type="strand" evidence="18">
    <location>
        <begin position="129"/>
        <end position="131"/>
    </location>
</feature>
<feature type="helix" evidence="18">
    <location>
        <begin position="147"/>
        <end position="150"/>
    </location>
</feature>
<feature type="helix" evidence="18">
    <location>
        <begin position="155"/>
        <end position="167"/>
    </location>
</feature>
<feature type="helix" evidence="18">
    <location>
        <begin position="168"/>
        <end position="170"/>
    </location>
</feature>
<feature type="helix" evidence="18">
    <location>
        <begin position="176"/>
        <end position="194"/>
    </location>
</feature>
<feature type="strand" evidence="18">
    <location>
        <begin position="197"/>
        <end position="202"/>
    </location>
</feature>
<feature type="strand" evidence="18">
    <location>
        <begin position="204"/>
        <end position="208"/>
    </location>
</feature>
<feature type="strand" evidence="18">
    <location>
        <begin position="211"/>
        <end position="217"/>
    </location>
</feature>
<feature type="helix" evidence="18">
    <location>
        <begin position="221"/>
        <end position="232"/>
    </location>
</feature>
<feature type="strand" evidence="18">
    <location>
        <begin position="236"/>
        <end position="241"/>
    </location>
</feature>
<feature type="turn" evidence="18">
    <location>
        <begin position="244"/>
        <end position="246"/>
    </location>
</feature>
<feature type="strand" evidence="18">
    <location>
        <begin position="251"/>
        <end position="254"/>
    </location>
</feature>
<feature type="strand" evidence="18">
    <location>
        <begin position="256"/>
        <end position="258"/>
    </location>
</feature>
<feature type="strand" evidence="18">
    <location>
        <begin position="277"/>
        <end position="279"/>
    </location>
</feature>
<feature type="turn" evidence="18">
    <location>
        <begin position="282"/>
        <end position="285"/>
    </location>
</feature>
<feature type="strand" evidence="18">
    <location>
        <begin position="297"/>
        <end position="299"/>
    </location>
</feature>
<feature type="turn" evidence="18">
    <location>
        <begin position="300"/>
        <end position="302"/>
    </location>
</feature>
<feature type="helix" evidence="18">
    <location>
        <begin position="304"/>
        <end position="307"/>
    </location>
</feature>
<feature type="turn" evidence="18">
    <location>
        <begin position="308"/>
        <end position="310"/>
    </location>
</feature>
<feature type="strand" evidence="19">
    <location>
        <begin position="313"/>
        <end position="317"/>
    </location>
</feature>
<feature type="strand" evidence="18">
    <location>
        <begin position="323"/>
        <end position="325"/>
    </location>
</feature>
<feature type="strand" evidence="18">
    <location>
        <begin position="330"/>
        <end position="332"/>
    </location>
</feature>
<feature type="strand" evidence="19">
    <location>
        <begin position="344"/>
        <end position="348"/>
    </location>
</feature>
<reference key="1">
    <citation type="journal article" date="1997" name="Gene">
        <title>Isolation of a full-length human WNT7A gene implicated in limb development and cell transformation, and mapping to chromosome 3p25.</title>
        <authorList>
            <person name="Bui T.D."/>
            <person name="Lako M."/>
            <person name="Lejeune S."/>
            <person name="Curtis A.R.J."/>
            <person name="Strachan T."/>
            <person name="Lindsay S."/>
            <person name="Harris A.L."/>
        </authorList>
    </citation>
    <scope>NUCLEOTIDE SEQUENCE [MRNA]</scope>
    <source>
        <tissue>Fetal brain</tissue>
    </source>
</reference>
<reference key="2">
    <citation type="journal article" date="1996" name="Cytogenet. Cell Genet.">
        <title>Isolation, characterization and chromosomal assignment of the human WNT7A gene.</title>
        <authorList>
            <person name="Ikegawa S."/>
            <person name="Kumano Y."/>
            <person name="Okui K."/>
            <person name="Fujiwara T."/>
            <person name="Takahashi E."/>
            <person name="Nakamura Y."/>
        </authorList>
    </citation>
    <scope>NUCLEOTIDE SEQUENCE [MRNA]</scope>
</reference>
<reference key="3">
    <citation type="submission" date="2005-07" db="EMBL/GenBank/DDBJ databases">
        <authorList>
            <person name="Mural R.J."/>
            <person name="Istrail S."/>
            <person name="Sutton G.G."/>
            <person name="Florea L."/>
            <person name="Halpern A.L."/>
            <person name="Mobarry C.M."/>
            <person name="Lippert R."/>
            <person name="Walenz B."/>
            <person name="Shatkay H."/>
            <person name="Dew I."/>
            <person name="Miller J.R."/>
            <person name="Flanigan M.J."/>
            <person name="Edwards N.J."/>
            <person name="Bolanos R."/>
            <person name="Fasulo D."/>
            <person name="Halldorsson B.V."/>
            <person name="Hannenhalli S."/>
            <person name="Turner R."/>
            <person name="Yooseph S."/>
            <person name="Lu F."/>
            <person name="Nusskern D.R."/>
            <person name="Shue B.C."/>
            <person name="Zheng X.H."/>
            <person name="Zhong F."/>
            <person name="Delcher A.L."/>
            <person name="Huson D.H."/>
            <person name="Kravitz S.A."/>
            <person name="Mouchard L."/>
            <person name="Reinert K."/>
            <person name="Remington K.A."/>
            <person name="Clark A.G."/>
            <person name="Waterman M.S."/>
            <person name="Eichler E.E."/>
            <person name="Adams M.D."/>
            <person name="Hunkapiller M.W."/>
            <person name="Myers E.W."/>
            <person name="Venter J.C."/>
        </authorList>
    </citation>
    <scope>NUCLEOTIDE SEQUENCE [LARGE SCALE GENOMIC DNA]</scope>
</reference>
<reference key="4">
    <citation type="journal article" date="2004" name="Genome Res.">
        <title>The status, quality, and expansion of the NIH full-length cDNA project: the Mammalian Gene Collection (MGC).</title>
        <authorList>
            <consortium name="The MGC Project Team"/>
        </authorList>
    </citation>
    <scope>NUCLEOTIDE SEQUENCE [LARGE SCALE MRNA]</scope>
    <source>
        <tissue>Ovary</tissue>
    </source>
</reference>
<reference key="5">
    <citation type="journal article" date="1994" name="Cancer Res.">
        <title>Differential expression of human Wnt genes 2, 3, 4, and 7B in human breast cell lines and normal and disease states of human breast tissue.</title>
        <authorList>
            <person name="Huguet E.L."/>
            <person name="McMahon J.A."/>
            <person name="McMahon A.P."/>
            <person name="Bicknell R."/>
            <person name="Harris A.L."/>
        </authorList>
    </citation>
    <scope>NUCLEOTIDE SEQUENCE [MRNA] OF 204-327</scope>
    <source>
        <tissue>Mammary gland</tissue>
    </source>
</reference>
<reference key="6">
    <citation type="journal article" date="2016" name="Elife">
        <title>Active and water-soluble form of lipidated Wnt protein is maintained by a serum glycoprotein afamin/alpha-albumin.</title>
        <authorList>
            <person name="Mihara E."/>
            <person name="Hirai H."/>
            <person name="Yamamoto H."/>
            <person name="Tamura-Kawakami K."/>
            <person name="Matano M."/>
            <person name="Kikuchi A."/>
            <person name="Sato T."/>
            <person name="Takagi J."/>
        </authorList>
    </citation>
    <scope>INTERACTION WITH AFM</scope>
    <scope>SUBCELLULAR LOCATION</scope>
</reference>
<reference key="7">
    <citation type="journal article" date="2018" name="Science">
        <title>A molecular mechanism for Wnt ligand-specific signaling.</title>
        <authorList>
            <person name="Eubelen M."/>
            <person name="Bostaille N."/>
            <person name="Cabochette P."/>
            <person name="Gauquier A."/>
            <person name="Tebabi P."/>
            <person name="Dumitru A.C."/>
            <person name="Koehler M."/>
            <person name="Gut P."/>
            <person name="Alsteens D."/>
            <person name="Stainier D.Y.R."/>
            <person name="Garcia-Pino A."/>
            <person name="Vanhollebeke B."/>
        </authorList>
    </citation>
    <scope>FUNCTION</scope>
    <scope>INTERACTION WITH RECK</scope>
    <scope>DOMAIN</scope>
    <scope>PALMITOLEOYLATION AT SER-206</scope>
    <scope>MUTAGENESIS OF SER-206; VAL-241; 251-PHE-LEU-252 AND LYS-262</scope>
</reference>
<reference evidence="17" key="8">
    <citation type="journal article" date="2015" name="Nature">
        <title>Notum deacylates Wnt proteins to suppress signalling activity.</title>
        <authorList>
            <person name="Kakugawa S."/>
            <person name="Langton P.F."/>
            <person name="Zebisch M."/>
            <person name="Howell S.A."/>
            <person name="Chang T.H."/>
            <person name="Liu Y."/>
            <person name="Feizi T."/>
            <person name="Bineva G."/>
            <person name="O'Reilly N."/>
            <person name="Snijders A.P."/>
            <person name="Jones E.Y."/>
            <person name="Vincent J.P."/>
        </authorList>
    </citation>
    <scope>X-RAY CRYSTALLOGRAPHY (1.50 ANGSTROMS) OF 202-209 IN COMPLEX WITH (9Z)-HEXADECENOIC ACID</scope>
</reference>
<reference key="9">
    <citation type="journal article" date="2006" name="Am. J. Hum. Genet.">
        <title>Mutations in WNT7A cause a range of limb malformations, including Fuhrmann syndrome and Al-Awadi/Raas-Rothschild/Schinzel phocomelia syndrome.</title>
        <authorList>
            <person name="Woods C.G."/>
            <person name="Stricker S."/>
            <person name="Seemann P."/>
            <person name="Stern R."/>
            <person name="Cox J."/>
            <person name="Sherridan E."/>
            <person name="Roberts E."/>
            <person name="Springell K."/>
            <person name="Scott S."/>
            <person name="Karbani G."/>
            <person name="Sharif S.M."/>
            <person name="Toomes C."/>
            <person name="Bond J."/>
            <person name="Kumar D."/>
            <person name="Al-Gazali L."/>
            <person name="Mundlos S."/>
        </authorList>
    </citation>
    <scope>VARIANT FUHRS THR-109</scope>
    <scope>VARIANT LPHAS CYS-292</scope>
    <scope>CHARACTERIZATION OF VARIANT FUHRS THR-109</scope>
    <scope>CHARACTERIZATION OF VARIANT LPHAS CYS-292</scope>
    <scope>INVOLVEMENT IN FUHRS</scope>
    <scope>INVOLVEMENT IN LPHAS</scope>
    <scope>FUNCTION</scope>
</reference>
<reference key="10">
    <citation type="journal article" date="2007" name="Am. J. Med. Genet. A">
        <title>Al-Awadi/Raas-Rothschild syndrome: two new cases and review.</title>
        <authorList>
            <person name="Lonardo F."/>
            <person name="Sabba G."/>
            <person name="Luquetti D.V."/>
            <person name="Monica M.D."/>
            <person name="Scarano G."/>
        </authorList>
    </citation>
    <scope>VARIANT LPHAS CYS-292</scope>
</reference>
<reference key="11">
    <citation type="journal article" date="2010" name="Am. J. Med. Genet. A">
        <title>A novel homozygous Arg222Trp missense mutation in WNT7A in two sisters with severe Al-Awadi/Raas-Rothschild/Schinzel phocomelia syndrome.</title>
        <authorList>
            <person name="Kantaputra P.N."/>
            <person name="Mundlos S."/>
            <person name="Sripathomsawat W."/>
        </authorList>
    </citation>
    <scope>VARIANT LPHAS TRP-222</scope>
</reference>
<reference key="12">
    <citation type="journal article" date="2011" name="Am. J. Med. Genet. A">
        <title>Al-Awadi-Raas-Rothschild (limb/pelvis/uterus-hypoplasia/aplasia) syndrome and WNT7A mutations: genetic homogeneity and nosological delineation.</title>
        <authorList>
            <person name="Garavelli L."/>
            <person name="Wischmeijer A."/>
            <person name="Rosato S."/>
            <person name="Gelmini C."/>
            <person name="Reverberi S."/>
            <person name="Sassi S."/>
            <person name="Ferrari A."/>
            <person name="Mari F."/>
            <person name="Zabel B."/>
            <person name="Lausch E."/>
            <person name="Unger S."/>
            <person name="Superti-Furga A."/>
        </authorList>
    </citation>
    <scope>VARIANT LPHAS LYS-72</scope>
</reference>
<reference key="13">
    <citation type="journal article" date="2016" name="Eur. J. Med. Genet.">
        <title>A novel missense mutation, p.(R102W) in WNT7A causes Al-Awadi Raas-Rothschild syndrome in a fetus.</title>
        <authorList>
            <person name="Mutlu M.B."/>
            <person name="Cetinkaya A."/>
            <person name="Koc N."/>
            <person name="Ceylaner G."/>
            <person name="Erguner B."/>
            <person name="Aydin H."/>
            <person name="Karaman S."/>
            <person name="Demirci O."/>
            <person name="Goksu K."/>
            <person name="Karaman A."/>
        </authorList>
    </citation>
    <scope>VARIANT LPHAS TRP-102</scope>
</reference>
<reference key="14">
    <citation type="journal article" date="2016" name="Hum. Mol. Genet.">
        <title>A secreted WNT-ligand-binding domain of FZD5 generated by a frameshift mutation causes autosomal dominant coloboma.</title>
        <authorList>
            <person name="Liu C."/>
            <person name="Widen S.A."/>
            <person name="Williamson K.A."/>
            <person name="Ratnapriya R."/>
            <person name="Gerth-Kahlert C."/>
            <person name="Rainger J."/>
            <person name="Alur R.P."/>
            <person name="Strachan E."/>
            <person name="Manjunath S.H."/>
            <person name="Balakrishnan A."/>
            <person name="Floyd J.A."/>
            <person name="Li T."/>
            <person name="Waskiewicz A."/>
            <person name="Brooks B.P."/>
            <person name="Lehmann O.J."/>
            <person name="FitzPatrick D.R."/>
            <person name="Swaroop A."/>
        </authorList>
    </citation>
    <scope>INTERACTION WITH FZD5</scope>
</reference>
<reference key="15">
    <citation type="journal article" date="2017" name="J. Hum. Genet.">
        <title>Santos syndrome is caused by mutation in the WNT7A gene.</title>
        <authorList>
            <person name="Alves L.U."/>
            <person name="Santos S."/>
            <person name="Musso C.M."/>
            <person name="Ezquina S.A."/>
            <person name="Opitz J.M."/>
            <person name="Kok F."/>
            <person name="Otto P.A."/>
            <person name="Mingroni-Netto R.C."/>
        </authorList>
    </citation>
    <scope>VARIANT SS SER-312</scope>
    <scope>INVOLVEMENT IN SS</scope>
</reference>
<dbReference type="EMBL" id="U53476">
    <property type="protein sequence ID" value="AAC51319.1"/>
    <property type="molecule type" value="mRNA"/>
</dbReference>
<dbReference type="EMBL" id="D83175">
    <property type="protein sequence ID" value="BAA82509.1"/>
    <property type="molecule type" value="mRNA"/>
</dbReference>
<dbReference type="EMBL" id="CH471055">
    <property type="protein sequence ID" value="EAW64173.1"/>
    <property type="molecule type" value="Genomic_DNA"/>
</dbReference>
<dbReference type="EMBL" id="BC008811">
    <property type="protein sequence ID" value="AAH08811.1"/>
    <property type="molecule type" value="mRNA"/>
</dbReference>
<dbReference type="CCDS" id="CCDS2616.1"/>
<dbReference type="RefSeq" id="NP_004616.2">
    <property type="nucleotide sequence ID" value="NM_004625.3"/>
</dbReference>
<dbReference type="PDB" id="4UZQ">
    <property type="method" value="X-ray"/>
    <property type="resolution" value="1.50 A"/>
    <property type="chains" value="B=202-209"/>
</dbReference>
<dbReference type="PDB" id="8TZO">
    <property type="method" value="EM"/>
    <property type="resolution" value="3.10 A"/>
    <property type="chains" value="A=1-349"/>
</dbReference>
<dbReference type="PDB" id="8TZP">
    <property type="method" value="EM"/>
    <property type="resolution" value="3.23 A"/>
    <property type="chains" value="A=1-349"/>
</dbReference>
<dbReference type="PDBsum" id="4UZQ"/>
<dbReference type="PDBsum" id="8TZO"/>
<dbReference type="PDBsum" id="8TZP"/>
<dbReference type="EMDB" id="EMD-41764"/>
<dbReference type="EMDB" id="EMD-41765"/>
<dbReference type="SMR" id="O00755"/>
<dbReference type="BioGRID" id="113313">
    <property type="interactions" value="42"/>
</dbReference>
<dbReference type="DIP" id="DIP-61511N"/>
<dbReference type="FunCoup" id="O00755">
    <property type="interactions" value="520"/>
</dbReference>
<dbReference type="IntAct" id="O00755">
    <property type="interactions" value="48"/>
</dbReference>
<dbReference type="MINT" id="O00755"/>
<dbReference type="STRING" id="9606.ENSP00000285018"/>
<dbReference type="GlyCosmos" id="O00755">
    <property type="glycosylation" value="3 sites, No reported glycans"/>
</dbReference>
<dbReference type="GlyGen" id="O00755">
    <property type="glycosylation" value="3 sites"/>
</dbReference>
<dbReference type="iPTMnet" id="O00755"/>
<dbReference type="PhosphoSitePlus" id="O00755"/>
<dbReference type="BioMuta" id="WNT7A"/>
<dbReference type="jPOST" id="O00755"/>
<dbReference type="MassIVE" id="O00755"/>
<dbReference type="PaxDb" id="9606-ENSP00000285018"/>
<dbReference type="PeptideAtlas" id="O00755"/>
<dbReference type="ProteomicsDB" id="48019"/>
<dbReference type="TopDownProteomics" id="O00755"/>
<dbReference type="Antibodypedia" id="2520">
    <property type="antibodies" value="199 antibodies from 30 providers"/>
</dbReference>
<dbReference type="DNASU" id="7476"/>
<dbReference type="Ensembl" id="ENST00000285018.5">
    <property type="protein sequence ID" value="ENSP00000285018.4"/>
    <property type="gene ID" value="ENSG00000154764.6"/>
</dbReference>
<dbReference type="GeneID" id="7476"/>
<dbReference type="KEGG" id="hsa:7476"/>
<dbReference type="MANE-Select" id="ENST00000285018.5">
    <property type="protein sequence ID" value="ENSP00000285018.4"/>
    <property type="RefSeq nucleotide sequence ID" value="NM_004625.4"/>
    <property type="RefSeq protein sequence ID" value="NP_004616.2"/>
</dbReference>
<dbReference type="UCSC" id="uc003bye.2">
    <property type="organism name" value="human"/>
</dbReference>
<dbReference type="AGR" id="HGNC:12786"/>
<dbReference type="CTD" id="7476"/>
<dbReference type="DisGeNET" id="7476"/>
<dbReference type="GeneCards" id="WNT7A"/>
<dbReference type="HGNC" id="HGNC:12786">
    <property type="gene designation" value="WNT7A"/>
</dbReference>
<dbReference type="HPA" id="ENSG00000154764">
    <property type="expression patterns" value="Tissue enhanced (brain, gallbladder, placenta)"/>
</dbReference>
<dbReference type="MalaCards" id="WNT7A"/>
<dbReference type="MIM" id="228930">
    <property type="type" value="phenotype"/>
</dbReference>
<dbReference type="MIM" id="276820">
    <property type="type" value="phenotype"/>
</dbReference>
<dbReference type="MIM" id="601570">
    <property type="type" value="gene"/>
</dbReference>
<dbReference type="MIM" id="613005">
    <property type="type" value="phenotype"/>
</dbReference>
<dbReference type="neXtProt" id="NX_O00755"/>
<dbReference type="OpenTargets" id="ENSG00000154764"/>
<dbReference type="Orphanet" id="2854">
    <property type="disease" value="Fuhrmann syndrome"/>
</dbReference>
<dbReference type="Orphanet" id="2879">
    <property type="disease" value="Phocomelia, Schinzel type"/>
</dbReference>
<dbReference type="PharmGKB" id="PA37387"/>
<dbReference type="VEuPathDB" id="HostDB:ENSG00000154764"/>
<dbReference type="eggNOG" id="KOG3913">
    <property type="taxonomic scope" value="Eukaryota"/>
</dbReference>
<dbReference type="GeneTree" id="ENSGT00940000158523"/>
<dbReference type="HOGENOM" id="CLU_033039_1_4_1"/>
<dbReference type="InParanoid" id="O00755"/>
<dbReference type="OMA" id="QGYNDQE"/>
<dbReference type="OrthoDB" id="5945655at2759"/>
<dbReference type="PAN-GO" id="O00755">
    <property type="GO annotations" value="7 GO annotations based on evolutionary models"/>
</dbReference>
<dbReference type="PhylomeDB" id="O00755"/>
<dbReference type="TreeFam" id="TF105310"/>
<dbReference type="PathwayCommons" id="O00755"/>
<dbReference type="Reactome" id="R-HSA-3238698">
    <property type="pathway name" value="WNT ligand biogenesis and trafficking"/>
</dbReference>
<dbReference type="Reactome" id="R-HSA-373080">
    <property type="pathway name" value="Class B/2 (Secretin family receptors)"/>
</dbReference>
<dbReference type="SignaLink" id="O00755"/>
<dbReference type="SIGNOR" id="O00755"/>
<dbReference type="BioGRID-ORCS" id="7476">
    <property type="hits" value="11 hits in 1136 CRISPR screens"/>
</dbReference>
<dbReference type="EvolutionaryTrace" id="O00755"/>
<dbReference type="GeneWiki" id="WNT7A"/>
<dbReference type="GenomeRNAi" id="7476"/>
<dbReference type="Pharos" id="O00755">
    <property type="development level" value="Tbio"/>
</dbReference>
<dbReference type="PRO" id="PR:O00755"/>
<dbReference type="Proteomes" id="UP000005640">
    <property type="component" value="Chromosome 3"/>
</dbReference>
<dbReference type="RNAct" id="O00755">
    <property type="molecule type" value="protein"/>
</dbReference>
<dbReference type="Bgee" id="ENSG00000154764">
    <property type="expression patterns" value="Expressed in cortical plate and 69 other cell types or tissues"/>
</dbReference>
<dbReference type="GO" id="GO:0009986">
    <property type="term" value="C:cell surface"/>
    <property type="evidence" value="ECO:0007669"/>
    <property type="project" value="Ensembl"/>
</dbReference>
<dbReference type="GO" id="GO:0030666">
    <property type="term" value="C:endocytic vesicle membrane"/>
    <property type="evidence" value="ECO:0000304"/>
    <property type="project" value="Reactome"/>
</dbReference>
<dbReference type="GO" id="GO:0005788">
    <property type="term" value="C:endoplasmic reticulum lumen"/>
    <property type="evidence" value="ECO:0000304"/>
    <property type="project" value="Reactome"/>
</dbReference>
<dbReference type="GO" id="GO:0070062">
    <property type="term" value="C:extracellular exosome"/>
    <property type="evidence" value="ECO:0000304"/>
    <property type="project" value="Reactome"/>
</dbReference>
<dbReference type="GO" id="GO:0031012">
    <property type="term" value="C:extracellular matrix"/>
    <property type="evidence" value="ECO:0007669"/>
    <property type="project" value="Ensembl"/>
</dbReference>
<dbReference type="GO" id="GO:0005576">
    <property type="term" value="C:extracellular region"/>
    <property type="evidence" value="ECO:0000304"/>
    <property type="project" value="Reactome"/>
</dbReference>
<dbReference type="GO" id="GO:0005615">
    <property type="term" value="C:extracellular space"/>
    <property type="evidence" value="ECO:0000318"/>
    <property type="project" value="GO_Central"/>
</dbReference>
<dbReference type="GO" id="GO:0098978">
    <property type="term" value="C:glutamatergic synapse"/>
    <property type="evidence" value="ECO:0000314"/>
    <property type="project" value="SynGO"/>
</dbReference>
<dbReference type="GO" id="GO:0005796">
    <property type="term" value="C:Golgi lumen"/>
    <property type="evidence" value="ECO:0000304"/>
    <property type="project" value="Reactome"/>
</dbReference>
<dbReference type="GO" id="GO:0005886">
    <property type="term" value="C:plasma membrane"/>
    <property type="evidence" value="ECO:0000304"/>
    <property type="project" value="Reactome"/>
</dbReference>
<dbReference type="GO" id="GO:0098793">
    <property type="term" value="C:presynapse"/>
    <property type="evidence" value="ECO:0007669"/>
    <property type="project" value="GOC"/>
</dbReference>
<dbReference type="GO" id="GO:0098685">
    <property type="term" value="C:Schaffer collateral - CA1 synapse"/>
    <property type="evidence" value="ECO:0007669"/>
    <property type="project" value="Ensembl"/>
</dbReference>
<dbReference type="GO" id="GO:0005125">
    <property type="term" value="F:cytokine activity"/>
    <property type="evidence" value="ECO:0000314"/>
    <property type="project" value="BHF-UCL"/>
</dbReference>
<dbReference type="GO" id="GO:0005109">
    <property type="term" value="F:frizzled binding"/>
    <property type="evidence" value="ECO:0000318"/>
    <property type="project" value="GO_Central"/>
</dbReference>
<dbReference type="GO" id="GO:0048018">
    <property type="term" value="F:receptor ligand activity"/>
    <property type="evidence" value="ECO:0000314"/>
    <property type="project" value="BHF-UCL"/>
</dbReference>
<dbReference type="GO" id="GO:0005102">
    <property type="term" value="F:signaling receptor binding"/>
    <property type="evidence" value="ECO:0000353"/>
    <property type="project" value="BHF-UCL"/>
</dbReference>
<dbReference type="GO" id="GO:0001525">
    <property type="term" value="P:angiogenesis"/>
    <property type="evidence" value="ECO:0007669"/>
    <property type="project" value="Ensembl"/>
</dbReference>
<dbReference type="GO" id="GO:0006915">
    <property type="term" value="P:apoptotic process"/>
    <property type="evidence" value="ECO:0007669"/>
    <property type="project" value="Ensembl"/>
</dbReference>
<dbReference type="GO" id="GO:0045167">
    <property type="term" value="P:asymmetric protein localization involved in cell fate determination"/>
    <property type="evidence" value="ECO:0007669"/>
    <property type="project" value="Ensembl"/>
</dbReference>
<dbReference type="GO" id="GO:0007409">
    <property type="term" value="P:axonogenesis"/>
    <property type="evidence" value="ECO:0000304"/>
    <property type="project" value="ParkinsonsUK-UCL"/>
</dbReference>
<dbReference type="GO" id="GO:0060070">
    <property type="term" value="P:canonical Wnt signaling pathway"/>
    <property type="evidence" value="ECO:0000314"/>
    <property type="project" value="BHF-UCL"/>
</dbReference>
<dbReference type="GO" id="GO:0001502">
    <property type="term" value="P:cartilage condensation"/>
    <property type="evidence" value="ECO:0000314"/>
    <property type="project" value="AgBase"/>
</dbReference>
<dbReference type="GO" id="GO:0045165">
    <property type="term" value="P:cell fate commitment"/>
    <property type="evidence" value="ECO:0000318"/>
    <property type="project" value="GO_Central"/>
</dbReference>
<dbReference type="GO" id="GO:0021846">
    <property type="term" value="P:cell proliferation in forebrain"/>
    <property type="evidence" value="ECO:0000314"/>
    <property type="project" value="BHF-UCL"/>
</dbReference>
<dbReference type="GO" id="GO:0071560">
    <property type="term" value="P:cellular response to transforming growth factor beta stimulus"/>
    <property type="evidence" value="ECO:0000270"/>
    <property type="project" value="UniProtKB"/>
</dbReference>
<dbReference type="GO" id="GO:0022009">
    <property type="term" value="P:central nervous system vasculogenesis"/>
    <property type="evidence" value="ECO:0007669"/>
    <property type="project" value="Ensembl"/>
</dbReference>
<dbReference type="GO" id="GO:0021707">
    <property type="term" value="P:cerebellar granule cell differentiation"/>
    <property type="evidence" value="ECO:0007669"/>
    <property type="project" value="Ensembl"/>
</dbReference>
<dbReference type="GO" id="GO:0002062">
    <property type="term" value="P:chondrocyte differentiation"/>
    <property type="evidence" value="ECO:0000314"/>
    <property type="project" value="AgBase"/>
</dbReference>
<dbReference type="GO" id="GO:0060997">
    <property type="term" value="P:dendritic spine morphogenesis"/>
    <property type="evidence" value="ECO:0000314"/>
    <property type="project" value="ParkinsonsUK-UCL"/>
</dbReference>
<dbReference type="GO" id="GO:0009953">
    <property type="term" value="P:dorsal/ventral pattern formation"/>
    <property type="evidence" value="ECO:0007669"/>
    <property type="project" value="Ensembl"/>
</dbReference>
<dbReference type="GO" id="GO:0000578">
    <property type="term" value="P:embryonic axis specification"/>
    <property type="evidence" value="ECO:0000315"/>
    <property type="project" value="BHF-UCL"/>
</dbReference>
<dbReference type="GO" id="GO:0042733">
    <property type="term" value="P:embryonic digit morphogenesis"/>
    <property type="evidence" value="ECO:0000315"/>
    <property type="project" value="BHF-UCL"/>
</dbReference>
<dbReference type="GO" id="GO:0035115">
    <property type="term" value="P:embryonic forelimb morphogenesis"/>
    <property type="evidence" value="ECO:0000315"/>
    <property type="project" value="BHF-UCL"/>
</dbReference>
<dbReference type="GO" id="GO:0035116">
    <property type="term" value="P:embryonic hindlimb morphogenesis"/>
    <property type="evidence" value="ECO:0000315"/>
    <property type="project" value="BHF-UCL"/>
</dbReference>
<dbReference type="GO" id="GO:0060856">
    <property type="term" value="P:establishment of blood-brain barrier"/>
    <property type="evidence" value="ECO:0007669"/>
    <property type="project" value="Ensembl"/>
</dbReference>
<dbReference type="GO" id="GO:0030010">
    <property type="term" value="P:establishment of cell polarity"/>
    <property type="evidence" value="ECO:0007669"/>
    <property type="project" value="Ensembl"/>
</dbReference>
<dbReference type="GO" id="GO:1904861">
    <property type="term" value="P:excitatory synapse assembly"/>
    <property type="evidence" value="ECO:0000304"/>
    <property type="project" value="ParkinsonsUK-UCL"/>
</dbReference>
<dbReference type="GO" id="GO:0070307">
    <property type="term" value="P:lens fiber cell development"/>
    <property type="evidence" value="ECO:0000250"/>
    <property type="project" value="BHF-UCL"/>
</dbReference>
<dbReference type="GO" id="GO:0043066">
    <property type="term" value="P:negative regulation of apoptotic process"/>
    <property type="evidence" value="ECO:0007669"/>
    <property type="project" value="Ensembl"/>
</dbReference>
<dbReference type="GO" id="GO:0050768">
    <property type="term" value="P:negative regulation of neurogenesis"/>
    <property type="evidence" value="ECO:0000314"/>
    <property type="project" value="BHF-UCL"/>
</dbReference>
<dbReference type="GO" id="GO:0030182">
    <property type="term" value="P:neuron differentiation"/>
    <property type="evidence" value="ECO:0000318"/>
    <property type="project" value="GO_Central"/>
</dbReference>
<dbReference type="GO" id="GO:0007269">
    <property type="term" value="P:neurotransmitter secretion"/>
    <property type="evidence" value="ECO:0007669"/>
    <property type="project" value="Ensembl"/>
</dbReference>
<dbReference type="GO" id="GO:0060066">
    <property type="term" value="P:oviduct development"/>
    <property type="evidence" value="ECO:0007669"/>
    <property type="project" value="Ensembl"/>
</dbReference>
<dbReference type="GO" id="GO:0045893">
    <property type="term" value="P:positive regulation of DNA-templated transcription"/>
    <property type="evidence" value="ECO:0000314"/>
    <property type="project" value="BHF-UCL"/>
</dbReference>
<dbReference type="GO" id="GO:0010595">
    <property type="term" value="P:positive regulation of endothelial cell migration"/>
    <property type="evidence" value="ECO:0007669"/>
    <property type="project" value="Ensembl"/>
</dbReference>
<dbReference type="GO" id="GO:0060054">
    <property type="term" value="P:positive regulation of epithelial cell proliferation involved in wound healing"/>
    <property type="evidence" value="ECO:0000314"/>
    <property type="project" value="BHF-UCL"/>
</dbReference>
<dbReference type="GO" id="GO:2000463">
    <property type="term" value="P:positive regulation of excitatory postsynaptic potential"/>
    <property type="evidence" value="ECO:0000314"/>
    <property type="project" value="ParkinsonsUK-UCL"/>
</dbReference>
<dbReference type="GO" id="GO:1904891">
    <property type="term" value="P:positive regulation of excitatory synapse assembly"/>
    <property type="evidence" value="ECO:0000314"/>
    <property type="project" value="ParkinsonsUK-UCL"/>
</dbReference>
<dbReference type="GO" id="GO:0010628">
    <property type="term" value="P:positive regulation of gene expression"/>
    <property type="evidence" value="ECO:0007669"/>
    <property type="project" value="Ensembl"/>
</dbReference>
<dbReference type="GO" id="GO:0046330">
    <property type="term" value="P:positive regulation of JNK cascade"/>
    <property type="evidence" value="ECO:0000318"/>
    <property type="project" value="GO_Central"/>
</dbReference>
<dbReference type="GO" id="GO:1905386">
    <property type="term" value="P:positive regulation of protein localization to presynapse"/>
    <property type="evidence" value="ECO:0000304"/>
    <property type="project" value="ParkinsonsUK-UCL"/>
</dbReference>
<dbReference type="GO" id="GO:0051247">
    <property type="term" value="P:positive regulation of protein metabolic process"/>
    <property type="evidence" value="ECO:0000314"/>
    <property type="project" value="ARUK-UCL"/>
</dbReference>
<dbReference type="GO" id="GO:0051965">
    <property type="term" value="P:positive regulation of synapse assembly"/>
    <property type="evidence" value="ECO:0000314"/>
    <property type="project" value="BHF-UCL"/>
</dbReference>
<dbReference type="GO" id="GO:0045944">
    <property type="term" value="P:positive regulation of transcription by RNA polymerase II"/>
    <property type="evidence" value="ECO:0000314"/>
    <property type="project" value="BHF-UCL"/>
</dbReference>
<dbReference type="GO" id="GO:0099068">
    <property type="term" value="P:postsynapse assembly"/>
    <property type="evidence" value="ECO:0000304"/>
    <property type="project" value="ParkinsonsUK-UCL"/>
</dbReference>
<dbReference type="GO" id="GO:0099054">
    <property type="term" value="P:presynapse assembly"/>
    <property type="evidence" value="ECO:0000304"/>
    <property type="project" value="ParkinsonsUK-UCL"/>
</dbReference>
<dbReference type="GO" id="GO:0031133">
    <property type="term" value="P:regulation of axon diameter"/>
    <property type="evidence" value="ECO:0007669"/>
    <property type="project" value="Ensembl"/>
</dbReference>
<dbReference type="GO" id="GO:0099175">
    <property type="term" value="P:regulation of postsynapse organization"/>
    <property type="evidence" value="ECO:0007669"/>
    <property type="project" value="Ensembl"/>
</dbReference>
<dbReference type="GO" id="GO:1905606">
    <property type="term" value="P:regulation of presynapse assembly"/>
    <property type="evidence" value="ECO:0000314"/>
    <property type="project" value="SynGO"/>
</dbReference>
<dbReference type="GO" id="GO:2000300">
    <property type="term" value="P:regulation of synaptic vesicle exocytosis"/>
    <property type="evidence" value="ECO:0007669"/>
    <property type="project" value="Ensembl"/>
</dbReference>
<dbReference type="GO" id="GO:0032355">
    <property type="term" value="P:response to estradiol"/>
    <property type="evidence" value="ECO:0007669"/>
    <property type="project" value="Ensembl"/>
</dbReference>
<dbReference type="GO" id="GO:0043627">
    <property type="term" value="P:response to estrogen"/>
    <property type="evidence" value="ECO:0007669"/>
    <property type="project" value="Ensembl"/>
</dbReference>
<dbReference type="GO" id="GO:0062009">
    <property type="term" value="P:secondary palate development"/>
    <property type="evidence" value="ECO:0000315"/>
    <property type="project" value="BHF-UCL"/>
</dbReference>
<dbReference type="GO" id="GO:0007548">
    <property type="term" value="P:sex differentiation"/>
    <property type="evidence" value="ECO:0000304"/>
    <property type="project" value="ProtInc"/>
</dbReference>
<dbReference type="GO" id="GO:0014719">
    <property type="term" value="P:skeletal muscle satellite cell activation"/>
    <property type="evidence" value="ECO:0007669"/>
    <property type="project" value="Ensembl"/>
</dbReference>
<dbReference type="GO" id="GO:0014834">
    <property type="term" value="P:skeletal muscle satellite cell maintenance involved in skeletal muscle regeneration"/>
    <property type="evidence" value="ECO:0007669"/>
    <property type="project" value="Ensembl"/>
</dbReference>
<dbReference type="GO" id="GO:0048103">
    <property type="term" value="P:somatic stem cell division"/>
    <property type="evidence" value="ECO:0007669"/>
    <property type="project" value="Ensembl"/>
</dbReference>
<dbReference type="GO" id="GO:0035019">
    <property type="term" value="P:somatic stem cell population maintenance"/>
    <property type="evidence" value="ECO:0007669"/>
    <property type="project" value="Ensembl"/>
</dbReference>
<dbReference type="GO" id="GO:0048864">
    <property type="term" value="P:stem cell development"/>
    <property type="evidence" value="ECO:0000314"/>
    <property type="project" value="BHF-UCL"/>
</dbReference>
<dbReference type="GO" id="GO:0036465">
    <property type="term" value="P:synaptic vesicle recycling"/>
    <property type="evidence" value="ECO:0000304"/>
    <property type="project" value="ParkinsonsUK-UCL"/>
</dbReference>
<dbReference type="GO" id="GO:0061038">
    <property type="term" value="P:uterus morphogenesis"/>
    <property type="evidence" value="ECO:0007669"/>
    <property type="project" value="Ensembl"/>
</dbReference>
<dbReference type="GO" id="GO:0060071">
    <property type="term" value="P:Wnt signaling pathway, planar cell polarity pathway"/>
    <property type="evidence" value="ECO:0000314"/>
    <property type="project" value="BHF-UCL"/>
</dbReference>
<dbReference type="GO" id="GO:0035313">
    <property type="term" value="P:wound healing, spreading of epidermal cells"/>
    <property type="evidence" value="ECO:0000314"/>
    <property type="project" value="BHF-UCL"/>
</dbReference>
<dbReference type="CDD" id="cd19349">
    <property type="entry name" value="Wnt_Wnt7a"/>
    <property type="match status" value="1"/>
</dbReference>
<dbReference type="FunFam" id="3.30.2460.20:FF:000001">
    <property type="entry name" value="Wnt homolog"/>
    <property type="match status" value="1"/>
</dbReference>
<dbReference type="Gene3D" id="3.30.2460.20">
    <property type="match status" value="1"/>
</dbReference>
<dbReference type="InterPro" id="IPR005817">
    <property type="entry name" value="Wnt"/>
</dbReference>
<dbReference type="InterPro" id="IPR013300">
    <property type="entry name" value="Wnt7"/>
</dbReference>
<dbReference type="InterPro" id="IPR043158">
    <property type="entry name" value="Wnt_C"/>
</dbReference>
<dbReference type="InterPro" id="IPR018161">
    <property type="entry name" value="Wnt_CS"/>
</dbReference>
<dbReference type="PANTHER" id="PTHR12027:SF78">
    <property type="entry name" value="PROTEIN WNT-7A"/>
    <property type="match status" value="1"/>
</dbReference>
<dbReference type="PANTHER" id="PTHR12027">
    <property type="entry name" value="WNT RELATED"/>
    <property type="match status" value="1"/>
</dbReference>
<dbReference type="Pfam" id="PF00110">
    <property type="entry name" value="wnt"/>
    <property type="match status" value="1"/>
</dbReference>
<dbReference type="PRINTS" id="PR01891">
    <property type="entry name" value="WNT7PROTEIN"/>
</dbReference>
<dbReference type="PRINTS" id="PR01349">
    <property type="entry name" value="WNTPROTEIN"/>
</dbReference>
<dbReference type="SMART" id="SM00097">
    <property type="entry name" value="WNT1"/>
    <property type="match status" value="1"/>
</dbReference>
<dbReference type="PROSITE" id="PS00246">
    <property type="entry name" value="WNT1"/>
    <property type="match status" value="1"/>
</dbReference>
<protein>
    <recommendedName>
        <fullName>Protein Wnt-7a</fullName>
    </recommendedName>
</protein>
<gene>
    <name type="primary">WNT7A</name>
</gene>
<sequence>MNRKARRCLGHLFLSLGMVYLRIGGFSSVVALGASIICNKIPGLAPRQRAICQSRPDAIIVIGEGSQMGLDECQFQFRNGRWNCSALGERTVFGKELKVGSREAAFTYAIIAAGVAHAITAACTQGNLSDCGCDKEKQGQYHRDEGWKWGGCSADIRYGIGFAKVFVDAREIKQNARTLMNLHNNEAGRKILEENMKLECKCHGVSGSCTTKTCWTTLPQFRELGYVLKDKYNEAVHVEPVRASRNKRPTFLKIKKPLSYRKPMDTDLVYIEKSPNYCEEDPVTGSVGTQGRACNKTAPQASGCDLMCCGRGYNTHQYARVWQCNCKFHWCCYVKCNTCSERTEMYTCK</sequence>